<gene>
    <name type="primary">Grm1</name>
    <name type="synonym">Gprc1a</name>
    <name type="synonym">Mglur1</name>
</gene>
<organism>
    <name type="scientific">Mus musculus</name>
    <name type="common">Mouse</name>
    <dbReference type="NCBI Taxonomy" id="10090"/>
    <lineage>
        <taxon>Eukaryota</taxon>
        <taxon>Metazoa</taxon>
        <taxon>Chordata</taxon>
        <taxon>Craniata</taxon>
        <taxon>Vertebrata</taxon>
        <taxon>Euteleostomi</taxon>
        <taxon>Mammalia</taxon>
        <taxon>Eutheria</taxon>
        <taxon>Euarchontoglires</taxon>
        <taxon>Glires</taxon>
        <taxon>Rodentia</taxon>
        <taxon>Myomorpha</taxon>
        <taxon>Muroidea</taxon>
        <taxon>Muridae</taxon>
        <taxon>Murinae</taxon>
        <taxon>Mus</taxon>
        <taxon>Mus</taxon>
    </lineage>
</organism>
<protein>
    <recommendedName>
        <fullName>Metabotropic glutamate receptor 1</fullName>
        <shortName>mGluR1</shortName>
    </recommendedName>
</protein>
<name>GRM1_MOUSE</name>
<keyword id="KW-0025">Alternative splicing</keyword>
<keyword id="KW-1003">Cell membrane</keyword>
<keyword id="KW-0966">Cell projection</keyword>
<keyword id="KW-1015">Disulfide bond</keyword>
<keyword id="KW-0297">G-protein coupled receptor</keyword>
<keyword id="KW-0325">Glycoprotein</keyword>
<keyword id="KW-0472">Membrane</keyword>
<keyword id="KW-0597">Phosphoprotein</keyword>
<keyword id="KW-0628">Postsynaptic cell membrane</keyword>
<keyword id="KW-0675">Receptor</keyword>
<keyword id="KW-1185">Reference proteome</keyword>
<keyword id="KW-0732">Signal</keyword>
<keyword id="KW-0770">Synapse</keyword>
<keyword id="KW-0807">Transducer</keyword>
<keyword id="KW-0812">Transmembrane</keyword>
<keyword id="KW-1133">Transmembrane helix</keyword>
<feature type="signal peptide" evidence="4">
    <location>
        <begin position="1"/>
        <end position="20"/>
    </location>
</feature>
<feature type="chain" id="PRO_0000012923" description="Metabotropic glutamate receptor 1">
    <location>
        <begin position="21"/>
        <end position="1199"/>
    </location>
</feature>
<feature type="topological domain" description="Extracellular" evidence="1">
    <location>
        <begin position="21"/>
        <end position="592"/>
    </location>
</feature>
<feature type="transmembrane region" description="Helical; Name=1" evidence="1">
    <location>
        <begin position="593"/>
        <end position="615"/>
    </location>
</feature>
<feature type="topological domain" description="Cytoplasmic" evidence="1">
    <location>
        <begin position="616"/>
        <end position="629"/>
    </location>
</feature>
<feature type="transmembrane region" description="Helical; Name=2" evidence="1">
    <location>
        <begin position="630"/>
        <end position="650"/>
    </location>
</feature>
<feature type="topological domain" description="Extracellular" evidence="1">
    <location>
        <begin position="651"/>
        <end position="658"/>
    </location>
</feature>
<feature type="transmembrane region" description="Helical; Name=3" evidence="1">
    <location>
        <begin position="659"/>
        <end position="680"/>
    </location>
</feature>
<feature type="topological domain" description="Cytoplasmic" evidence="1">
    <location>
        <begin position="681"/>
        <end position="703"/>
    </location>
</feature>
<feature type="transmembrane region" description="Helical; Name=4" evidence="1">
    <location>
        <begin position="704"/>
        <end position="727"/>
    </location>
</feature>
<feature type="topological domain" description="Extracellular" evidence="1">
    <location>
        <begin position="728"/>
        <end position="750"/>
    </location>
</feature>
<feature type="transmembrane region" description="Helical; Name=5" evidence="1">
    <location>
        <begin position="751"/>
        <end position="772"/>
    </location>
</feature>
<feature type="topological domain" description="Cytoplasmic" evidence="1">
    <location>
        <begin position="773"/>
        <end position="785"/>
    </location>
</feature>
<feature type="transmembrane region" description="Helical; Name=6" evidence="1">
    <location>
        <begin position="786"/>
        <end position="807"/>
    </location>
</feature>
<feature type="topological domain" description="Extracellular" evidence="1">
    <location>
        <begin position="808"/>
        <end position="815"/>
    </location>
</feature>
<feature type="transmembrane region" description="Helical; Name=7" evidence="1">
    <location>
        <begin position="816"/>
        <end position="840"/>
    </location>
</feature>
<feature type="topological domain" description="Cytoplasmic" evidence="1">
    <location>
        <begin position="841"/>
        <end position="1199"/>
    </location>
</feature>
<feature type="region of interest" description="Disordered" evidence="5">
    <location>
        <begin position="882"/>
        <end position="906"/>
    </location>
</feature>
<feature type="region of interest" description="Disordered" evidence="5">
    <location>
        <begin position="959"/>
        <end position="1035"/>
    </location>
</feature>
<feature type="region of interest" description="Disordered" evidence="5">
    <location>
        <begin position="1055"/>
        <end position="1082"/>
    </location>
</feature>
<feature type="region of interest" description="Disordered" evidence="5">
    <location>
        <begin position="1118"/>
        <end position="1177"/>
    </location>
</feature>
<feature type="compositionally biased region" description="Polar residues" evidence="5">
    <location>
        <begin position="885"/>
        <end position="895"/>
    </location>
</feature>
<feature type="compositionally biased region" description="Pro residues" evidence="5">
    <location>
        <begin position="1012"/>
        <end position="1032"/>
    </location>
</feature>
<feature type="compositionally biased region" description="Acidic residues" evidence="5">
    <location>
        <begin position="1125"/>
        <end position="1136"/>
    </location>
</feature>
<feature type="compositionally biased region" description="Low complexity" evidence="5">
    <location>
        <begin position="1159"/>
        <end position="1175"/>
    </location>
</feature>
<feature type="binding site" evidence="1">
    <location>
        <position position="74"/>
    </location>
    <ligand>
        <name>L-glutamate</name>
        <dbReference type="ChEBI" id="CHEBI:29985"/>
    </ligand>
</feature>
<feature type="binding site" evidence="1">
    <location>
        <position position="165"/>
    </location>
    <ligand>
        <name>L-glutamate</name>
        <dbReference type="ChEBI" id="CHEBI:29985"/>
    </ligand>
</feature>
<feature type="binding site" evidence="1">
    <location>
        <begin position="186"/>
        <end position="188"/>
    </location>
    <ligand>
        <name>L-glutamate</name>
        <dbReference type="ChEBI" id="CHEBI:29985"/>
    </ligand>
</feature>
<feature type="binding site" evidence="1">
    <location>
        <position position="236"/>
    </location>
    <ligand>
        <name>L-glutamate</name>
        <dbReference type="ChEBI" id="CHEBI:29985"/>
    </ligand>
</feature>
<feature type="binding site" evidence="1">
    <location>
        <position position="318"/>
    </location>
    <ligand>
        <name>L-glutamate</name>
        <dbReference type="ChEBI" id="CHEBI:29985"/>
    </ligand>
</feature>
<feature type="binding site" evidence="1">
    <location>
        <position position="409"/>
    </location>
    <ligand>
        <name>L-glutamate</name>
        <dbReference type="ChEBI" id="CHEBI:29985"/>
    </ligand>
</feature>
<feature type="modified residue" description="Phosphoserine" evidence="15">
    <location>
        <position position="853"/>
    </location>
</feature>
<feature type="modified residue" description="Phosphothreonine" evidence="15">
    <location>
        <position position="871"/>
    </location>
</feature>
<feature type="modified residue" description="Phosphoserine" evidence="2">
    <location>
        <position position="894"/>
    </location>
</feature>
<feature type="modified residue" description="Phosphoserine" evidence="15">
    <location>
        <position position="969"/>
    </location>
</feature>
<feature type="modified residue" description="Phosphoserine" evidence="15">
    <location>
        <position position="1097"/>
    </location>
</feature>
<feature type="modified residue" description="Phosphoserine" evidence="15">
    <location>
        <position position="1147"/>
    </location>
</feature>
<feature type="modified residue" description="Phosphothreonine" evidence="2">
    <location>
        <position position="1151"/>
    </location>
</feature>
<feature type="modified residue" description="Phosphoserine" evidence="15">
    <location>
        <position position="1154"/>
    </location>
</feature>
<feature type="glycosylation site" description="N-linked (GlcNAc...) asparagine" evidence="4">
    <location>
        <position position="98"/>
    </location>
</feature>
<feature type="glycosylation site" description="N-linked (GlcNAc...) asparagine" evidence="4">
    <location>
        <position position="223"/>
    </location>
</feature>
<feature type="glycosylation site" description="N-linked (GlcNAc...) asparagine" evidence="4">
    <location>
        <position position="397"/>
    </location>
</feature>
<feature type="glycosylation site" description="N-linked (GlcNAc...) asparagine" evidence="4">
    <location>
        <position position="515"/>
    </location>
</feature>
<feature type="glycosylation site" description="N-linked (GlcNAc...) asparagine" evidence="4">
    <location>
        <position position="747"/>
    </location>
</feature>
<feature type="disulfide bond" evidence="1">
    <location>
        <begin position="67"/>
        <end position="109"/>
    </location>
</feature>
<feature type="disulfide bond" description="Interchain" evidence="1">
    <location>
        <position position="140"/>
    </location>
</feature>
<feature type="disulfide bond" evidence="1">
    <location>
        <begin position="289"/>
        <end position="291"/>
    </location>
</feature>
<feature type="disulfide bond" evidence="1">
    <location>
        <begin position="378"/>
        <end position="394"/>
    </location>
</feature>
<feature type="disulfide bond" evidence="1">
    <location>
        <begin position="432"/>
        <end position="439"/>
    </location>
</feature>
<feature type="disulfide bond" evidence="1">
    <location>
        <begin position="657"/>
        <end position="746"/>
    </location>
</feature>
<feature type="splice variant" id="VSP_007184" description="In isoform 3." evidence="12">
    <original>SDGWA</original>
    <variation>RDSRN</variation>
    <location>
        <begin position="317"/>
        <end position="321"/>
    </location>
</feature>
<feature type="splice variant" id="VSP_007185" description="In isoform 3." evidence="12">
    <location>
        <begin position="322"/>
        <end position="1199"/>
    </location>
</feature>
<feature type="splice variant" id="VSP_007186" description="In isoform 2." evidence="12 13">
    <original>NSNGKSVSWSEPGGRQAPKG</original>
    <variation>KKRQPEFSPSSQCPSAHVQL</variation>
    <location>
        <begin position="887"/>
        <end position="906"/>
    </location>
</feature>
<feature type="splice variant" id="VSP_007187" description="In isoform 2." evidence="12 13">
    <location>
        <begin position="907"/>
        <end position="1199"/>
    </location>
</feature>
<feature type="mutagenesis site" description="Normal response to light but reduced retinal electrical activity in response to light in dark adapted retinas. Gross morphology is normal." evidence="8">
    <original>I</original>
    <variation>K</variation>
    <location>
        <position position="536"/>
    </location>
</feature>
<dbReference type="EMBL" id="AF320126">
    <property type="protein sequence ID" value="AAG41991.2"/>
    <property type="molecule type" value="mRNA"/>
</dbReference>
<dbReference type="EMBL" id="BC067057">
    <property type="protein sequence ID" value="AAH67057.1"/>
    <property type="molecule type" value="mRNA"/>
</dbReference>
<dbReference type="EMBL" id="BC079566">
    <property type="protein sequence ID" value="AAH79566.1"/>
    <property type="molecule type" value="mRNA"/>
</dbReference>
<dbReference type="EMBL" id="U89891">
    <property type="protein sequence ID" value="AAB48099.1"/>
    <property type="molecule type" value="mRNA"/>
</dbReference>
<dbReference type="CCDS" id="CCDS23696.1">
    <molecule id="P97772-1"/>
</dbReference>
<dbReference type="CCDS" id="CCDS48499.1">
    <molecule id="P97772-2"/>
</dbReference>
<dbReference type="RefSeq" id="NP_001107805.1">
    <molecule id="P97772-2"/>
    <property type="nucleotide sequence ID" value="NM_001114333.3"/>
</dbReference>
<dbReference type="RefSeq" id="NP_001415437.1">
    <molecule id="P97772-1"/>
    <property type="nucleotide sequence ID" value="NM_001428508.1"/>
</dbReference>
<dbReference type="RefSeq" id="NP_001415438.1">
    <molecule id="P97772-2"/>
    <property type="nucleotide sequence ID" value="NM_001428509.1"/>
</dbReference>
<dbReference type="RefSeq" id="NP_058672.1">
    <molecule id="P97772-1"/>
    <property type="nucleotide sequence ID" value="NM_016976.4"/>
</dbReference>
<dbReference type="RefSeq" id="XP_006512612.1">
    <molecule id="P97772-1"/>
    <property type="nucleotide sequence ID" value="XM_006512549.5"/>
</dbReference>
<dbReference type="SMR" id="P97772"/>
<dbReference type="BioGRID" id="200073">
    <property type="interactions" value="13"/>
</dbReference>
<dbReference type="CORUM" id="P97772"/>
<dbReference type="FunCoup" id="P97772">
    <property type="interactions" value="1112"/>
</dbReference>
<dbReference type="IntAct" id="P97772">
    <property type="interactions" value="7"/>
</dbReference>
<dbReference type="MINT" id="P97772"/>
<dbReference type="STRING" id="10090.ENSMUSP00000037255"/>
<dbReference type="BindingDB" id="P97772"/>
<dbReference type="ChEMBL" id="CHEMBL2892"/>
<dbReference type="GlyCosmos" id="P97772">
    <property type="glycosylation" value="5 sites, No reported glycans"/>
</dbReference>
<dbReference type="GlyGen" id="P97772">
    <property type="glycosylation" value="7 sites, 2 N-linked glycans (2 sites), 1 O-linked glycan (1 site)"/>
</dbReference>
<dbReference type="iPTMnet" id="P97772"/>
<dbReference type="PhosphoSitePlus" id="P97772"/>
<dbReference type="SwissPalm" id="P97772"/>
<dbReference type="jPOST" id="P97772"/>
<dbReference type="PaxDb" id="10090-ENSMUSP00000037255"/>
<dbReference type="PeptideAtlas" id="P97772"/>
<dbReference type="ProteomicsDB" id="269836">
    <molecule id="P97772-1"/>
</dbReference>
<dbReference type="ProteomicsDB" id="269837">
    <molecule id="P97772-2"/>
</dbReference>
<dbReference type="ProteomicsDB" id="269838">
    <molecule id="P97772-3"/>
</dbReference>
<dbReference type="Pumba" id="P97772"/>
<dbReference type="Antibodypedia" id="2943">
    <property type="antibodies" value="677 antibodies from 43 providers"/>
</dbReference>
<dbReference type="DNASU" id="14816"/>
<dbReference type="Ensembl" id="ENSMUST00000044306.13">
    <molecule id="P97772-1"/>
    <property type="protein sequence ID" value="ENSMUSP00000037255.7"/>
    <property type="gene ID" value="ENSMUSG00000019828.14"/>
</dbReference>
<dbReference type="Ensembl" id="ENSMUST00000105560.2">
    <molecule id="P97772-2"/>
    <property type="protein sequence ID" value="ENSMUSP00000101189.2"/>
    <property type="gene ID" value="ENSMUSG00000019828.14"/>
</dbReference>
<dbReference type="Ensembl" id="ENSMUST00000105561.9">
    <molecule id="P97772-2"/>
    <property type="protein sequence ID" value="ENSMUSP00000101190.3"/>
    <property type="gene ID" value="ENSMUSG00000019828.14"/>
</dbReference>
<dbReference type="GeneID" id="14816"/>
<dbReference type="KEGG" id="mmu:14816"/>
<dbReference type="UCSC" id="uc007ejh.2">
    <molecule id="P97772-2"/>
    <property type="organism name" value="mouse"/>
</dbReference>
<dbReference type="UCSC" id="uc007eji.2">
    <molecule id="P97772-1"/>
    <property type="organism name" value="mouse"/>
</dbReference>
<dbReference type="AGR" id="MGI:1351338"/>
<dbReference type="CTD" id="2911"/>
<dbReference type="MGI" id="MGI:1351338">
    <property type="gene designation" value="Grm1"/>
</dbReference>
<dbReference type="VEuPathDB" id="HostDB:ENSMUSG00000019828"/>
<dbReference type="eggNOG" id="KOG1056">
    <property type="taxonomic scope" value="Eukaryota"/>
</dbReference>
<dbReference type="GeneTree" id="ENSGT01030000234595"/>
<dbReference type="HOGENOM" id="CLU_005389_0_1_1"/>
<dbReference type="InParanoid" id="P97772"/>
<dbReference type="OMA" id="NEMACNQ"/>
<dbReference type="OrthoDB" id="425344at2759"/>
<dbReference type="PhylomeDB" id="P97772"/>
<dbReference type="TreeFam" id="TF313240"/>
<dbReference type="Reactome" id="R-MMU-416476">
    <property type="pathway name" value="G alpha (q) signalling events"/>
</dbReference>
<dbReference type="Reactome" id="R-MMU-420499">
    <property type="pathway name" value="Class C/3 (Metabotropic glutamate/pheromone receptors)"/>
</dbReference>
<dbReference type="Reactome" id="R-MMU-6794361">
    <property type="pathway name" value="Neurexins and neuroligins"/>
</dbReference>
<dbReference type="BioGRID-ORCS" id="14816">
    <property type="hits" value="3 hits in 76 CRISPR screens"/>
</dbReference>
<dbReference type="ChiTaRS" id="Grm1">
    <property type="organism name" value="mouse"/>
</dbReference>
<dbReference type="PRO" id="PR:P97772"/>
<dbReference type="Proteomes" id="UP000000589">
    <property type="component" value="Chromosome 10"/>
</dbReference>
<dbReference type="RNAct" id="P97772">
    <property type="molecule type" value="protein"/>
</dbReference>
<dbReference type="Bgee" id="ENSMUSG00000019828">
    <property type="expression patterns" value="Expressed in medial dorsal nucleus of thalamus and 82 other cell types or tissues"/>
</dbReference>
<dbReference type="GO" id="GO:0044293">
    <property type="term" value="C:dendriole"/>
    <property type="evidence" value="ECO:0000314"/>
    <property type="project" value="MGI"/>
</dbReference>
<dbReference type="GO" id="GO:0030425">
    <property type="term" value="C:dendrite"/>
    <property type="evidence" value="ECO:0000314"/>
    <property type="project" value="UniProtKB"/>
</dbReference>
<dbReference type="GO" id="GO:0038038">
    <property type="term" value="C:G protein-coupled receptor homodimeric complex"/>
    <property type="evidence" value="ECO:0007669"/>
    <property type="project" value="Ensembl"/>
</dbReference>
<dbReference type="GO" id="GO:0098978">
    <property type="term" value="C:glutamatergic synapse"/>
    <property type="evidence" value="ECO:0000314"/>
    <property type="project" value="SynGO"/>
</dbReference>
<dbReference type="GO" id="GO:0043005">
    <property type="term" value="C:neuron projection"/>
    <property type="evidence" value="ECO:0000314"/>
    <property type="project" value="BHF-UCL"/>
</dbReference>
<dbReference type="GO" id="GO:0043025">
    <property type="term" value="C:neuronal cell body"/>
    <property type="evidence" value="ECO:0000304"/>
    <property type="project" value="UniProtKB"/>
</dbReference>
<dbReference type="GO" id="GO:0005634">
    <property type="term" value="C:nucleus"/>
    <property type="evidence" value="ECO:0000314"/>
    <property type="project" value="MGI"/>
</dbReference>
<dbReference type="GO" id="GO:0005886">
    <property type="term" value="C:plasma membrane"/>
    <property type="evidence" value="ECO:0000250"/>
    <property type="project" value="UniProtKB"/>
</dbReference>
<dbReference type="GO" id="GO:0014069">
    <property type="term" value="C:postsynaptic density"/>
    <property type="evidence" value="ECO:0000314"/>
    <property type="project" value="MGI"/>
</dbReference>
<dbReference type="GO" id="GO:0045211">
    <property type="term" value="C:postsynaptic membrane"/>
    <property type="evidence" value="ECO:0000304"/>
    <property type="project" value="UniProtKB"/>
</dbReference>
<dbReference type="GO" id="GO:0098685">
    <property type="term" value="C:Schaffer collateral - CA1 synapse"/>
    <property type="evidence" value="ECO:0000314"/>
    <property type="project" value="SynGO"/>
</dbReference>
<dbReference type="GO" id="GO:0098872">
    <property type="term" value="F:G protein-coupled neurotransmitter receptor activity involved in regulation of postsynaptic cytosolic calcium ion concentration"/>
    <property type="evidence" value="ECO:0000314"/>
    <property type="project" value="SynGO"/>
</dbReference>
<dbReference type="GO" id="GO:0099530">
    <property type="term" value="F:G protein-coupled receptor activity involved in regulation of postsynaptic membrane potential"/>
    <property type="evidence" value="ECO:0000314"/>
    <property type="project" value="UniProt"/>
</dbReference>
<dbReference type="GO" id="GO:0008066">
    <property type="term" value="F:glutamate receptor activity"/>
    <property type="evidence" value="ECO:0000250"/>
    <property type="project" value="UniProtKB"/>
</dbReference>
<dbReference type="GO" id="GO:0001639">
    <property type="term" value="F:PLC activating G protein-coupled glutamate receptor activity"/>
    <property type="evidence" value="ECO:0000304"/>
    <property type="project" value="MGI"/>
</dbReference>
<dbReference type="GO" id="GO:0071257">
    <property type="term" value="P:cellular response to electrical stimulus"/>
    <property type="evidence" value="ECO:0000315"/>
    <property type="project" value="MGI"/>
</dbReference>
<dbReference type="GO" id="GO:0098712">
    <property type="term" value="P:L-glutamate import across plasma membrane"/>
    <property type="evidence" value="ECO:0000314"/>
    <property type="project" value="MGI"/>
</dbReference>
<dbReference type="GO" id="GO:0007626">
    <property type="term" value="P:locomotory behavior"/>
    <property type="evidence" value="ECO:0000315"/>
    <property type="project" value="UniProtKB"/>
</dbReference>
<dbReference type="GO" id="GO:0007206">
    <property type="term" value="P:phospholipase C-activating G protein-coupled glutamate receptor signaling pathway"/>
    <property type="evidence" value="ECO:0000250"/>
    <property type="project" value="UniProtKB"/>
</dbReference>
<dbReference type="GO" id="GO:0007200">
    <property type="term" value="P:phospholipase C-activating G protein-coupled receptor signaling pathway"/>
    <property type="evidence" value="ECO:0000314"/>
    <property type="project" value="UniProt"/>
</dbReference>
<dbReference type="GO" id="GO:0043410">
    <property type="term" value="P:positive regulation of MAPK cascade"/>
    <property type="evidence" value="ECO:0000314"/>
    <property type="project" value="UniProtKB"/>
</dbReference>
<dbReference type="GO" id="GO:0051930">
    <property type="term" value="P:regulation of sensory perception of pain"/>
    <property type="evidence" value="ECO:0000314"/>
    <property type="project" value="UniProtKB"/>
</dbReference>
<dbReference type="GO" id="GO:0019233">
    <property type="term" value="P:sensory perception of pain"/>
    <property type="evidence" value="ECO:0000315"/>
    <property type="project" value="UniProtKB"/>
</dbReference>
<dbReference type="GO" id="GO:0099538">
    <property type="term" value="P:synaptic signaling via neuropeptide"/>
    <property type="evidence" value="ECO:0000314"/>
    <property type="project" value="UniProt"/>
</dbReference>
<dbReference type="CDD" id="cd15449">
    <property type="entry name" value="7tmC_mGluR1"/>
    <property type="match status" value="1"/>
</dbReference>
<dbReference type="CDD" id="cd06374">
    <property type="entry name" value="PBP1_mGluR_groupI"/>
    <property type="match status" value="1"/>
</dbReference>
<dbReference type="FunFam" id="3.40.50.2300:FF:000219">
    <property type="entry name" value="Glutamate metabotropic receptor 5"/>
    <property type="match status" value="2"/>
</dbReference>
<dbReference type="FunFam" id="3.40.50.2300:FF:000337">
    <property type="entry name" value="Metabotropic glutamate receptor 1"/>
    <property type="match status" value="1"/>
</dbReference>
<dbReference type="FunFam" id="2.10.50.30:FF:000001">
    <property type="entry name" value="metabotropic glutamate receptor 1"/>
    <property type="match status" value="1"/>
</dbReference>
<dbReference type="Gene3D" id="3.40.50.2300">
    <property type="match status" value="2"/>
</dbReference>
<dbReference type="Gene3D" id="2.10.50.30">
    <property type="entry name" value="GPCR, family 3, nine cysteines domain"/>
    <property type="match status" value="1"/>
</dbReference>
<dbReference type="InterPro" id="IPR001828">
    <property type="entry name" value="ANF_lig-bd_rcpt"/>
</dbReference>
<dbReference type="InterPro" id="IPR000337">
    <property type="entry name" value="GPCR_3"/>
</dbReference>
<dbReference type="InterPro" id="IPR011500">
    <property type="entry name" value="GPCR_3_9-Cys_dom"/>
</dbReference>
<dbReference type="InterPro" id="IPR038550">
    <property type="entry name" value="GPCR_3_9-Cys_sf"/>
</dbReference>
<dbReference type="InterPro" id="IPR017978">
    <property type="entry name" value="GPCR_3_C"/>
</dbReference>
<dbReference type="InterPro" id="IPR017979">
    <property type="entry name" value="GPCR_3_CS"/>
</dbReference>
<dbReference type="InterPro" id="IPR001256">
    <property type="entry name" value="GPCR_3_mGluR1"/>
</dbReference>
<dbReference type="InterPro" id="IPR000162">
    <property type="entry name" value="GPCR_3_mtglu_rcpt"/>
</dbReference>
<dbReference type="InterPro" id="IPR019588">
    <property type="entry name" value="Metabotropic_Glu_rcpt_Homer-bd"/>
</dbReference>
<dbReference type="InterPro" id="IPR050726">
    <property type="entry name" value="mGluR"/>
</dbReference>
<dbReference type="InterPro" id="IPR028082">
    <property type="entry name" value="Peripla_BP_I"/>
</dbReference>
<dbReference type="PANTHER" id="PTHR24060">
    <property type="entry name" value="METABOTROPIC GLUTAMATE RECEPTOR"/>
    <property type="match status" value="1"/>
</dbReference>
<dbReference type="Pfam" id="PF00003">
    <property type="entry name" value="7tm_3"/>
    <property type="match status" value="1"/>
</dbReference>
<dbReference type="Pfam" id="PF01094">
    <property type="entry name" value="ANF_receptor"/>
    <property type="match status" value="1"/>
</dbReference>
<dbReference type="Pfam" id="PF10606">
    <property type="entry name" value="GluR_Homer-bdg"/>
    <property type="match status" value="1"/>
</dbReference>
<dbReference type="Pfam" id="PF07562">
    <property type="entry name" value="NCD3G"/>
    <property type="match status" value="1"/>
</dbReference>
<dbReference type="PRINTS" id="PR00248">
    <property type="entry name" value="GPCRMGR"/>
</dbReference>
<dbReference type="PRINTS" id="PR01051">
    <property type="entry name" value="MTABOTROPC1R"/>
</dbReference>
<dbReference type="PRINTS" id="PR00593">
    <property type="entry name" value="MTABOTROPICR"/>
</dbReference>
<dbReference type="SMART" id="SM01229">
    <property type="entry name" value="GluR_Homer-bdg"/>
    <property type="match status" value="1"/>
</dbReference>
<dbReference type="SUPFAM" id="SSF53822">
    <property type="entry name" value="Periplasmic binding protein-like I"/>
    <property type="match status" value="1"/>
</dbReference>
<dbReference type="PROSITE" id="PS00979">
    <property type="entry name" value="G_PROTEIN_RECEP_F3_1"/>
    <property type="match status" value="1"/>
</dbReference>
<dbReference type="PROSITE" id="PS00980">
    <property type="entry name" value="G_PROTEIN_RECEP_F3_2"/>
    <property type="match status" value="1"/>
</dbReference>
<dbReference type="PROSITE" id="PS00981">
    <property type="entry name" value="G_PROTEIN_RECEP_F3_3"/>
    <property type="match status" value="1"/>
</dbReference>
<dbReference type="PROSITE" id="PS50259">
    <property type="entry name" value="G_PROTEIN_RECEP_F3_4"/>
    <property type="match status" value="1"/>
</dbReference>
<reference key="1">
    <citation type="journal article" date="1999" name="Brain Res. Mol. Brain Res.">
        <title>Cloning of novel splice variants of mouse mGluR1.</title>
        <authorList>
            <person name="Zhu H."/>
            <person name="Ryan K."/>
            <person name="Chen S."/>
        </authorList>
    </citation>
    <scope>NUCLEOTIDE SEQUENCE [MRNA] (ISOFORMS 1; 2 AND 3)</scope>
    <source>
        <strain>ICR</strain>
        <tissue>Brain</tissue>
    </source>
</reference>
<reference key="2">
    <citation type="journal article" date="2004" name="Genome Res.">
        <title>The status, quality, and expansion of the NIH full-length cDNA project: the Mammalian Gene Collection (MGC).</title>
        <authorList>
            <consortium name="The MGC Project Team"/>
        </authorList>
    </citation>
    <scope>NUCLEOTIDE SEQUENCE [LARGE SCALE MRNA] (ISOFORM 2)</scope>
    <source>
        <strain>C57BL/6J</strain>
        <tissue>Brain</tissue>
    </source>
</reference>
<reference key="3">
    <citation type="submission" date="1997-02" db="EMBL/GenBank/DDBJ databases">
        <authorList>
            <person name="Watanabe M."/>
        </authorList>
    </citation>
    <scope>NUCLEOTIDE SEQUENCE [MRNA] OF 945-1127 (ISOFORM 1)</scope>
    <source>
        <strain>C57BL/6J</strain>
    </source>
</reference>
<reference key="4">
    <citation type="journal article" date="2006" name="Mol. Cell. Proteomics">
        <title>Comprehensive identification of phosphorylation sites in postsynaptic density preparations.</title>
        <authorList>
            <person name="Trinidad J.C."/>
            <person name="Specht C.G."/>
            <person name="Thalhammer A."/>
            <person name="Schoepfer R."/>
            <person name="Burlingame A.L."/>
        </authorList>
    </citation>
    <scope>IDENTIFICATION BY MASS SPECTROMETRY [LARGE SCALE ANALYSIS]</scope>
    <source>
        <tissue>Brain</tissue>
    </source>
</reference>
<reference key="5">
    <citation type="journal article" date="2007" name="Neuron">
        <title>Sept4, a component of presynaptic scaffold and Lewy bodies, is required for the suppression of alpha-synuclein neurotoxicity.</title>
        <authorList>
            <person name="Ihara M."/>
            <person name="Yamasaki N."/>
            <person name="Hagiwara A."/>
            <person name="Tanigaki A."/>
            <person name="Kitano A."/>
            <person name="Hikawa R."/>
            <person name="Tomimoto H."/>
            <person name="Noda M."/>
            <person name="Takanashi M."/>
            <person name="Mori H."/>
            <person name="Hattori N."/>
            <person name="Miyakawa T."/>
            <person name="Kinoshita M."/>
        </authorList>
    </citation>
    <scope>TISSUE SPECIFICITY</scope>
</reference>
<reference key="6">
    <citation type="journal article" date="2010" name="Cell">
        <title>A tissue-specific atlas of mouse protein phosphorylation and expression.</title>
        <authorList>
            <person name="Huttlin E.L."/>
            <person name="Jedrychowski M.P."/>
            <person name="Elias J.E."/>
            <person name="Goswami T."/>
            <person name="Rad R."/>
            <person name="Beausoleil S.A."/>
            <person name="Villen J."/>
            <person name="Haas W."/>
            <person name="Sowa M.E."/>
            <person name="Gygi S.P."/>
        </authorList>
    </citation>
    <scope>PHOSPHORYLATION [LARGE SCALE ANALYSIS] AT SER-853; THR-871; SER-969; SER-1097; SER-1147 AND SER-1154</scope>
    <scope>IDENTIFICATION BY MASS SPECTROMETRY [LARGE SCALE ANALYSIS]</scope>
    <source>
        <tissue>Brain</tissue>
    </source>
</reference>
<reference key="7">
    <citation type="journal article" date="2014" name="EMBO Rep.">
        <title>Type 1 metabotropic glutamate receptors (mGlu1) trigger the gating of GluD2 delta glutamate receptors.</title>
        <authorList>
            <person name="Ady V."/>
            <person name="Perroy J."/>
            <person name="Tricoire L."/>
            <person name="Piochon C."/>
            <person name="Dadak S."/>
            <person name="Chen X."/>
            <person name="Dusart I."/>
            <person name="Fagni L."/>
            <person name="Lambolez B."/>
            <person name="Levenes C."/>
        </authorList>
    </citation>
    <scope>FUNCTION</scope>
</reference>
<reference key="8">
    <citation type="journal article" date="2016" name="Adv. Exp. Med. Biol.">
        <title>A Chemical Mutagenesis Screen Identifies Mouse Models with ERG Defects.</title>
        <authorList>
            <person name="Charette J.R."/>
            <person name="Samuels I.S."/>
            <person name="Yu M."/>
            <person name="Stone L."/>
            <person name="Hicks W."/>
            <person name="Shi L.Y."/>
            <person name="Krebs M.P."/>
            <person name="Naggert J.K."/>
            <person name="Nishina P.M."/>
            <person name="Peachey N.S."/>
        </authorList>
    </citation>
    <scope>FUNCTION</scope>
    <scope>MUTAGENESIS OF ILE-536</scope>
</reference>
<reference key="9">
    <citation type="journal article" date="2017" name="Neuropharmacology">
        <title>mGlu1 receptor canonical signaling pathway contributes to the opening of the orphan GluD2 receptor.</title>
        <authorList>
            <person name="Dadak S."/>
            <person name="Bouquier N."/>
            <person name="Goyet E."/>
            <person name="Fagni L."/>
            <person name="Levenes C."/>
            <person name="Perroy J."/>
        </authorList>
    </citation>
    <scope>FUNCTION</scope>
    <scope>SUBCELLULAR LOCATION</scope>
</reference>
<reference key="10">
    <citation type="journal article" date="2018" name="Mol. Psychiatry">
        <title>GluD1, linked to schizophrenia, controls the burst firing of dopamine neurons.</title>
        <authorList>
            <person name="Benamer N."/>
            <person name="Marti F."/>
            <person name="Lujan R."/>
            <person name="Hepp R."/>
            <person name="Aubier T.G."/>
            <person name="Dupin A.A.M."/>
            <person name="Frebourg G."/>
            <person name="Pons S."/>
            <person name="Maskos U."/>
            <person name="Faure P."/>
            <person name="Hay Y.A."/>
            <person name="Lambolez B."/>
            <person name="Tricoire L."/>
        </authorList>
    </citation>
    <scope>FUNCTION</scope>
</reference>
<reference key="11">
    <citation type="journal article" date="2020" name="Front. Neurosci.">
        <title>Unipolar (Dendritic) Brush Cells Are Morphologically Complex and Require Tbr2 for Differentiation and Migration.</title>
        <authorList>
            <person name="McDonough A."/>
            <person name="Elsen G.E."/>
            <person name="Daza R.M."/>
            <person name="Bachleda A.R."/>
            <person name="Pizzo D."/>
            <person name="DelleTorri O.M."/>
            <person name="Hevner R.F."/>
        </authorList>
    </citation>
    <scope>SUBCELLULAR LOCATION</scope>
    <scope>TISSUE SPECIFICITY</scope>
</reference>
<accession>P97772</accession>
<accession>Q6AXG4</accession>
<accession>Q9EPV6</accession>
<proteinExistence type="evidence at protein level"/>
<comment type="function">
    <text evidence="7 8 9 10">G-protein coupled receptor for glutamate. Ligand binding causes a conformation change that triggers signaling via guanine nucleotide-binding proteins (G proteins) and modulates the activity of down-stream effectors. Signaling activates a phosphatidylinositol-calcium second messenger system. May participate in the central action of glutamate in the CNS, such as long-term potentiation in the hippocampus and long-term depression in the cerebellum (By. similarity). May function in the light response in the retina (PubMed:26427409). Induces GRID1 and GRID2 cation-channel activation via GNAQ-PLC-PKC pathway in dopaminergic neurons and cerebellar Purkinje cell, respectively (PubMed:24357660, PubMed:27276689, PubMed:28696429).</text>
</comment>
<comment type="subunit">
    <text evidence="2">Homodimer; disulfide-linked (By similarity). The PPXXF motif binds HOMER1, HOMER2 and HOMER3. Interacts with TAMALIN (By similarity). Interacts with RYR1, RYR2, ITPR1, SHANK1 and SHANK3. Interacts with SHIA1 (By similarity).</text>
</comment>
<comment type="subcellular location">
    <subcellularLocation>
        <location evidence="3">Cell membrane</location>
        <topology evidence="3">Multi-pass membrane protein</topology>
    </subcellularLocation>
    <subcellularLocation>
        <location evidence="9">Postsynaptic cell membrane</location>
        <topology evidence="4">Multi-pass membrane protein</topology>
    </subcellularLocation>
    <subcellularLocation>
        <location evidence="11">Cell projection</location>
        <location evidence="11">Dendrite</location>
    </subcellularLocation>
    <text evidence="11">Located in dendrioles, small dendrites that makes up a brush structure found as the terminal specialization of a dendrite of a unipolar brush cell.</text>
</comment>
<comment type="alternative products">
    <event type="alternative splicing"/>
    <isoform>
        <id>P97772-1</id>
        <name>1</name>
        <name>A</name>
        <sequence type="displayed"/>
    </isoform>
    <isoform>
        <id>P97772-2</id>
        <name>2</name>
        <name>B</name>
        <sequence type="described" ref="VSP_007186 VSP_007187"/>
    </isoform>
    <isoform>
        <id>P97772-3</id>
        <name>3</name>
        <name>E55</name>
        <sequence type="described" ref="VSP_007184 VSP_007185"/>
    </isoform>
</comment>
<comment type="tissue specificity">
    <text evidence="6 11">Expressed in the striatum (at protein level). Expressed in type II unipolar brush cells of the cerebellum (at protein level) (PubMed:33488348).</text>
</comment>
<comment type="similarity">
    <text evidence="14">Belongs to the G-protein coupled receptor 3 family.</text>
</comment>
<evidence type="ECO:0000250" key="1"/>
<evidence type="ECO:0000250" key="2">
    <source>
        <dbReference type="UniProtKB" id="P23385"/>
    </source>
</evidence>
<evidence type="ECO:0000250" key="3">
    <source>
        <dbReference type="UniProtKB" id="Q13255"/>
    </source>
</evidence>
<evidence type="ECO:0000255" key="4"/>
<evidence type="ECO:0000256" key="5">
    <source>
        <dbReference type="SAM" id="MobiDB-lite"/>
    </source>
</evidence>
<evidence type="ECO:0000269" key="6">
    <source>
    </source>
</evidence>
<evidence type="ECO:0000269" key="7">
    <source>
    </source>
</evidence>
<evidence type="ECO:0000269" key="8">
    <source>
    </source>
</evidence>
<evidence type="ECO:0000269" key="9">
    <source>
    </source>
</evidence>
<evidence type="ECO:0000269" key="10">
    <source>
    </source>
</evidence>
<evidence type="ECO:0000269" key="11">
    <source>
    </source>
</evidence>
<evidence type="ECO:0000303" key="12">
    <source>
    </source>
</evidence>
<evidence type="ECO:0000303" key="13">
    <source>
    </source>
</evidence>
<evidence type="ECO:0000305" key="14"/>
<evidence type="ECO:0007744" key="15">
    <source>
    </source>
</evidence>
<sequence length="1199" mass="133212">MVRLLLIFFPMIFLEMSILPRMPDRKVLLAGASSQRSVARMDGDVIIGALFSVHHQPPAEKVPERKCGEIREQYGIQRVEAMFHTLDKINADPVLLPNITLGSEIRDSCWHSSVALEQSIEFIRDSLISIRDEKDGLNRCLPDGQTLPPGRTKKPIAGVIGPGSSSVAIQVQNLLQLFDIPQIAYSATSIDLSDKTLYKYFLRVVPSDTLQARAMLDIVKRYNWTYVSAVHTEGNYGESGMDAFKELAAQEGLCIAHSDKIYSNAGEKSFDRLLRKLRERLPKARVVVCFCEGMTVRGLLSAMRRLGVVGEFSLIGSDGWADRDEVIEGYEVEANGGITIKLQSPEVRSFDDYFLKLRLDTNTRNPWFPEFWQHRFQCRLPGHLLENPNFKKVCTGNESLEENYVQDSKMGFVINAIYAMAHGLQNMHHALCPGYVGLCDAMKPIDGRKLLDFLIKSSFVGVSGEEVWFDEKGDAPGRYDIMNLQYTEANRYDYVHVGTWHEGVLNIDDYKIQMNKSGMVRSVCSEPCLKGQIKVIRKGEVSCCWICTACKENEFVQDEFTCRACDLGWWPNAELTGCEPITIRYLEWSDIESIIAIAFSCLGILVTLFVTLIFVLYRDTPVVKSSSRELCYIILAGIFLGYVCPFTLIAKPTTTSCYLQRLLVGLSSAMCYSALVTKTNRIARILAGSKKKICTRKPRFMSAWAQVIIASILISVQLTLVVTLIIMEPPMPILSYPSIKEVYLICNTSNLGVVAPVGYNGLLIMSCTYYAFKTRNVPANFNEAKYIAFTMYTTCIIWLAFVPIYFGSNYKIITTCFAVSLSVTVALGCMFTPKMYIIIAKPERNVRSAFTTSDVVRMHVGDGKLPCRSNTFLNIFRRKKPGAGNANSNGKSVSWSEPGGRQAPKGQHVWQRLSVHVKTNETACNQTAVIKPLTKSYQGSGKSLTFSDASTKTLYNVEEEDNTPSTHFSPPSSPSMVVHRRGPPVATTPPLPPHLSAEETPLFLADSVIPKGLPPPLPQQQQQPPPQPPPQQPKSLMDQLQGVVTNFGSGIPDFHAVLAGPGTPGNGLRSLYPPPPPPQHLQMLPLQLSTFREEPISPPGEDDDDDSSERFKLLQEFVYEREGNTEEDDLEEEEDLPAASKLTPEDSPALTPPSPFRDSVASGSSVPSSPVSESVLCTPPNVTYASVILRDYKQSSSTL</sequence>